<gene>
    <name evidence="2" type="primary">trmB</name>
    <name type="ordered locus">GK2823</name>
</gene>
<feature type="chain" id="PRO_0000229164" description="tRNA (guanine-N(7)-)-methyltransferase">
    <location>
        <begin position="1"/>
        <end position="217"/>
    </location>
</feature>
<feature type="region of interest" description="Interaction with RNA" evidence="2">
    <location>
        <begin position="124"/>
        <end position="129"/>
    </location>
</feature>
<feature type="active site" evidence="1">
    <location>
        <position position="118"/>
    </location>
</feature>
<feature type="binding site" evidence="2">
    <location>
        <position position="44"/>
    </location>
    <ligand>
        <name>S-adenosyl-L-methionine</name>
        <dbReference type="ChEBI" id="CHEBI:59789"/>
    </ligand>
</feature>
<feature type="binding site" evidence="2">
    <location>
        <position position="69"/>
    </location>
    <ligand>
        <name>S-adenosyl-L-methionine</name>
        <dbReference type="ChEBI" id="CHEBI:59789"/>
    </ligand>
</feature>
<feature type="binding site" evidence="2">
    <location>
        <position position="96"/>
    </location>
    <ligand>
        <name>S-adenosyl-L-methionine</name>
        <dbReference type="ChEBI" id="CHEBI:59789"/>
    </ligand>
</feature>
<feature type="binding site" evidence="2">
    <location>
        <position position="118"/>
    </location>
    <ligand>
        <name>S-adenosyl-L-methionine</name>
        <dbReference type="ChEBI" id="CHEBI:59789"/>
    </ligand>
</feature>
<feature type="binding site" evidence="2">
    <location>
        <position position="122"/>
    </location>
    <ligand>
        <name>substrate</name>
    </ligand>
</feature>
<feature type="binding site" evidence="2">
    <location>
        <position position="154"/>
    </location>
    <ligand>
        <name>substrate</name>
    </ligand>
</feature>
<feature type="binding site" evidence="2">
    <location>
        <begin position="191"/>
        <end position="194"/>
    </location>
    <ligand>
        <name>substrate</name>
    </ligand>
</feature>
<reference key="1">
    <citation type="journal article" date="2004" name="Nucleic Acids Res.">
        <title>Thermoadaptation trait revealed by the genome sequence of thermophilic Geobacillus kaustophilus.</title>
        <authorList>
            <person name="Takami H."/>
            <person name="Takaki Y."/>
            <person name="Chee G.-J."/>
            <person name="Nishi S."/>
            <person name="Shimamura S."/>
            <person name="Suzuki H."/>
            <person name="Matsui S."/>
            <person name="Uchiyama I."/>
        </authorList>
    </citation>
    <scope>NUCLEOTIDE SEQUENCE [LARGE SCALE GENOMIC DNA]</scope>
    <source>
        <strain>HTA426</strain>
    </source>
</reference>
<accession>Q5KW28</accession>
<organism>
    <name type="scientific">Geobacillus kaustophilus (strain HTA426)</name>
    <dbReference type="NCBI Taxonomy" id="235909"/>
    <lineage>
        <taxon>Bacteria</taxon>
        <taxon>Bacillati</taxon>
        <taxon>Bacillota</taxon>
        <taxon>Bacilli</taxon>
        <taxon>Bacillales</taxon>
        <taxon>Anoxybacillaceae</taxon>
        <taxon>Geobacillus</taxon>
        <taxon>Geobacillus thermoleovorans group</taxon>
    </lineage>
</organism>
<keyword id="KW-0489">Methyltransferase</keyword>
<keyword id="KW-1185">Reference proteome</keyword>
<keyword id="KW-0949">S-adenosyl-L-methionine</keyword>
<keyword id="KW-0808">Transferase</keyword>
<keyword id="KW-0819">tRNA processing</keyword>
<proteinExistence type="inferred from homology"/>
<sequence length="217" mass="25042">MRLRNKPWAKDKIAAYPQYVIPDPETKRGRWRELFGHDQPLHVEIGTGKGKFITEMAKLHPDVNFIGIELYPSVLVSALDKLIESGLANVKLLNANAKDLTAFFADGEVSRIYLNFSDPWPKKRHEKRRLTYRDFLALYDRILAEDGDIHLKTDNQSFFEYSLVSLSQYGFVLASVQLDLHQSGMTDNVMTEYEEKFSAKGNRIYRCEAVRPPRRSS</sequence>
<dbReference type="EC" id="2.1.1.33" evidence="2"/>
<dbReference type="EMBL" id="BA000043">
    <property type="protein sequence ID" value="BAD77108.1"/>
    <property type="molecule type" value="Genomic_DNA"/>
</dbReference>
<dbReference type="RefSeq" id="WP_011232297.1">
    <property type="nucleotide sequence ID" value="NC_006510.1"/>
</dbReference>
<dbReference type="SMR" id="Q5KW28"/>
<dbReference type="STRING" id="235909.GK2823"/>
<dbReference type="GeneID" id="32064716"/>
<dbReference type="KEGG" id="gka:GK2823"/>
<dbReference type="eggNOG" id="COG0220">
    <property type="taxonomic scope" value="Bacteria"/>
</dbReference>
<dbReference type="HOGENOM" id="CLU_050910_2_1_9"/>
<dbReference type="UniPathway" id="UPA00989"/>
<dbReference type="Proteomes" id="UP000001172">
    <property type="component" value="Chromosome"/>
</dbReference>
<dbReference type="GO" id="GO:0043527">
    <property type="term" value="C:tRNA methyltransferase complex"/>
    <property type="evidence" value="ECO:0007669"/>
    <property type="project" value="TreeGrafter"/>
</dbReference>
<dbReference type="GO" id="GO:0008176">
    <property type="term" value="F:tRNA (guanine(46)-N7)-methyltransferase activity"/>
    <property type="evidence" value="ECO:0007669"/>
    <property type="project" value="UniProtKB-UniRule"/>
</dbReference>
<dbReference type="CDD" id="cd02440">
    <property type="entry name" value="AdoMet_MTases"/>
    <property type="match status" value="1"/>
</dbReference>
<dbReference type="FunFam" id="3.40.50.150:FF:000035">
    <property type="entry name" value="tRNA (guanine-N(7)-)-methyltransferase"/>
    <property type="match status" value="1"/>
</dbReference>
<dbReference type="Gene3D" id="3.40.50.150">
    <property type="entry name" value="Vaccinia Virus protein VP39"/>
    <property type="match status" value="1"/>
</dbReference>
<dbReference type="HAMAP" id="MF_01057">
    <property type="entry name" value="tRNA_methyltr_TrmB"/>
    <property type="match status" value="1"/>
</dbReference>
<dbReference type="InterPro" id="IPR029063">
    <property type="entry name" value="SAM-dependent_MTases_sf"/>
</dbReference>
<dbReference type="InterPro" id="IPR003358">
    <property type="entry name" value="tRNA_(Gua-N-7)_MeTrfase_Trmb"/>
</dbReference>
<dbReference type="InterPro" id="IPR055361">
    <property type="entry name" value="tRNA_methyltr_TrmB_bact"/>
</dbReference>
<dbReference type="NCBIfam" id="NF001080">
    <property type="entry name" value="PRK00121.2-2"/>
    <property type="match status" value="1"/>
</dbReference>
<dbReference type="NCBIfam" id="TIGR00091">
    <property type="entry name" value="tRNA (guanosine(46)-N7)-methyltransferase TrmB"/>
    <property type="match status" value="1"/>
</dbReference>
<dbReference type="PANTHER" id="PTHR23417">
    <property type="entry name" value="3-DEOXY-D-MANNO-OCTULOSONIC-ACID TRANSFERASE/TRNA GUANINE-N 7 - -METHYLTRANSFERASE"/>
    <property type="match status" value="1"/>
</dbReference>
<dbReference type="PANTHER" id="PTHR23417:SF14">
    <property type="entry name" value="PENTACOTRIPEPTIDE-REPEAT REGION OF PRORP DOMAIN-CONTAINING PROTEIN"/>
    <property type="match status" value="1"/>
</dbReference>
<dbReference type="Pfam" id="PF02390">
    <property type="entry name" value="Methyltransf_4"/>
    <property type="match status" value="1"/>
</dbReference>
<dbReference type="SUPFAM" id="SSF53335">
    <property type="entry name" value="S-adenosyl-L-methionine-dependent methyltransferases"/>
    <property type="match status" value="1"/>
</dbReference>
<dbReference type="PROSITE" id="PS51625">
    <property type="entry name" value="SAM_MT_TRMB"/>
    <property type="match status" value="1"/>
</dbReference>
<name>TRMB_GEOKA</name>
<protein>
    <recommendedName>
        <fullName evidence="2">tRNA (guanine-N(7)-)-methyltransferase</fullName>
        <ecNumber evidence="2">2.1.1.33</ecNumber>
    </recommendedName>
    <alternativeName>
        <fullName evidence="2">tRNA (guanine(46)-N(7))-methyltransferase</fullName>
    </alternativeName>
    <alternativeName>
        <fullName evidence="2">tRNA(m7G46)-methyltransferase</fullName>
    </alternativeName>
</protein>
<comment type="function">
    <text evidence="2">Catalyzes the formation of N(7)-methylguanine at position 46 (m7G46) in tRNA.</text>
</comment>
<comment type="catalytic activity">
    <reaction evidence="2">
        <text>guanosine(46) in tRNA + S-adenosyl-L-methionine = N(7)-methylguanosine(46) in tRNA + S-adenosyl-L-homocysteine</text>
        <dbReference type="Rhea" id="RHEA:42708"/>
        <dbReference type="Rhea" id="RHEA-COMP:10188"/>
        <dbReference type="Rhea" id="RHEA-COMP:10189"/>
        <dbReference type="ChEBI" id="CHEBI:57856"/>
        <dbReference type="ChEBI" id="CHEBI:59789"/>
        <dbReference type="ChEBI" id="CHEBI:74269"/>
        <dbReference type="ChEBI" id="CHEBI:74480"/>
        <dbReference type="EC" id="2.1.1.33"/>
    </reaction>
</comment>
<comment type="pathway">
    <text evidence="2">tRNA modification; N(7)-methylguanine-tRNA biosynthesis.</text>
</comment>
<comment type="similarity">
    <text evidence="2">Belongs to the class I-like SAM-binding methyltransferase superfamily. TrmB family.</text>
</comment>
<evidence type="ECO:0000250" key="1"/>
<evidence type="ECO:0000255" key="2">
    <source>
        <dbReference type="HAMAP-Rule" id="MF_01057"/>
    </source>
</evidence>